<proteinExistence type="inferred from homology"/>
<accession>Q11QD0</accession>
<feature type="chain" id="PRO_1000056034" description="Large ribosomal subunit protein uL30">
    <location>
        <begin position="1"/>
        <end position="58"/>
    </location>
</feature>
<name>RL30_CYTH3</name>
<evidence type="ECO:0000255" key="1">
    <source>
        <dbReference type="HAMAP-Rule" id="MF_01371"/>
    </source>
</evidence>
<evidence type="ECO:0000305" key="2"/>
<dbReference type="EMBL" id="CP000383">
    <property type="protein sequence ID" value="ABG60384.1"/>
    <property type="molecule type" value="Genomic_DNA"/>
</dbReference>
<dbReference type="RefSeq" id="WP_011586493.1">
    <property type="nucleotide sequence ID" value="NC_008255.1"/>
</dbReference>
<dbReference type="SMR" id="Q11QD0"/>
<dbReference type="STRING" id="269798.CHU_3144"/>
<dbReference type="KEGG" id="chu:CHU_3144"/>
<dbReference type="eggNOG" id="COG1841">
    <property type="taxonomic scope" value="Bacteria"/>
</dbReference>
<dbReference type="HOGENOM" id="CLU_131047_1_1_10"/>
<dbReference type="OrthoDB" id="9812790at2"/>
<dbReference type="Proteomes" id="UP000001822">
    <property type="component" value="Chromosome"/>
</dbReference>
<dbReference type="GO" id="GO:0022625">
    <property type="term" value="C:cytosolic large ribosomal subunit"/>
    <property type="evidence" value="ECO:0007669"/>
    <property type="project" value="TreeGrafter"/>
</dbReference>
<dbReference type="GO" id="GO:0003735">
    <property type="term" value="F:structural constituent of ribosome"/>
    <property type="evidence" value="ECO:0007669"/>
    <property type="project" value="InterPro"/>
</dbReference>
<dbReference type="GO" id="GO:0006412">
    <property type="term" value="P:translation"/>
    <property type="evidence" value="ECO:0007669"/>
    <property type="project" value="UniProtKB-UniRule"/>
</dbReference>
<dbReference type="CDD" id="cd01658">
    <property type="entry name" value="Ribosomal_L30"/>
    <property type="match status" value="1"/>
</dbReference>
<dbReference type="Gene3D" id="3.30.1390.20">
    <property type="entry name" value="Ribosomal protein L30, ferredoxin-like fold domain"/>
    <property type="match status" value="1"/>
</dbReference>
<dbReference type="HAMAP" id="MF_01371_B">
    <property type="entry name" value="Ribosomal_uL30_B"/>
    <property type="match status" value="1"/>
</dbReference>
<dbReference type="InterPro" id="IPR036919">
    <property type="entry name" value="Ribo_uL30_ferredoxin-like_sf"/>
</dbReference>
<dbReference type="InterPro" id="IPR005996">
    <property type="entry name" value="Ribosomal_uL30_bac-type"/>
</dbReference>
<dbReference type="InterPro" id="IPR018038">
    <property type="entry name" value="Ribosomal_uL30_CS"/>
</dbReference>
<dbReference type="InterPro" id="IPR016082">
    <property type="entry name" value="Ribosomal_uL30_ferredoxin-like"/>
</dbReference>
<dbReference type="NCBIfam" id="TIGR01308">
    <property type="entry name" value="rpmD_bact"/>
    <property type="match status" value="1"/>
</dbReference>
<dbReference type="PANTHER" id="PTHR15892:SF2">
    <property type="entry name" value="LARGE RIBOSOMAL SUBUNIT PROTEIN UL30M"/>
    <property type="match status" value="1"/>
</dbReference>
<dbReference type="PANTHER" id="PTHR15892">
    <property type="entry name" value="MITOCHONDRIAL RIBOSOMAL PROTEIN L30"/>
    <property type="match status" value="1"/>
</dbReference>
<dbReference type="Pfam" id="PF00327">
    <property type="entry name" value="Ribosomal_L30"/>
    <property type="match status" value="1"/>
</dbReference>
<dbReference type="PIRSF" id="PIRSF002211">
    <property type="entry name" value="Ribosomal_L30_bac-type"/>
    <property type="match status" value="1"/>
</dbReference>
<dbReference type="SUPFAM" id="SSF55129">
    <property type="entry name" value="Ribosomal protein L30p/L7e"/>
    <property type="match status" value="1"/>
</dbReference>
<dbReference type="PROSITE" id="PS00634">
    <property type="entry name" value="RIBOSOMAL_L30"/>
    <property type="match status" value="1"/>
</dbReference>
<comment type="subunit">
    <text evidence="1">Part of the 50S ribosomal subunit.</text>
</comment>
<comment type="similarity">
    <text evidence="1">Belongs to the universal ribosomal protein uL30 family.</text>
</comment>
<sequence>MAKVKITQVVSAIKKTDNQKRVLASLGLGKINSSVEQELTPSIKGMLNKVNHLVVVSE</sequence>
<keyword id="KW-1185">Reference proteome</keyword>
<keyword id="KW-0687">Ribonucleoprotein</keyword>
<keyword id="KW-0689">Ribosomal protein</keyword>
<organism>
    <name type="scientific">Cytophaga hutchinsonii (strain ATCC 33406 / DSM 1761 / CIP 103989 / NBRC 15051 / NCIMB 9469 / D465)</name>
    <dbReference type="NCBI Taxonomy" id="269798"/>
    <lineage>
        <taxon>Bacteria</taxon>
        <taxon>Pseudomonadati</taxon>
        <taxon>Bacteroidota</taxon>
        <taxon>Cytophagia</taxon>
        <taxon>Cytophagales</taxon>
        <taxon>Cytophagaceae</taxon>
        <taxon>Cytophaga</taxon>
    </lineage>
</organism>
<gene>
    <name evidence="1" type="primary">rpmD</name>
    <name type="ordered locus">CHU_3144</name>
</gene>
<reference key="1">
    <citation type="journal article" date="2007" name="Appl. Environ. Microbiol.">
        <title>Genome sequence of the cellulolytic gliding bacterium Cytophaga hutchinsonii.</title>
        <authorList>
            <person name="Xie G."/>
            <person name="Bruce D.C."/>
            <person name="Challacombe J.F."/>
            <person name="Chertkov O."/>
            <person name="Detter J.C."/>
            <person name="Gilna P."/>
            <person name="Han C.S."/>
            <person name="Lucas S."/>
            <person name="Misra M."/>
            <person name="Myers G.L."/>
            <person name="Richardson P."/>
            <person name="Tapia R."/>
            <person name="Thayer N."/>
            <person name="Thompson L.S."/>
            <person name="Brettin T.S."/>
            <person name="Henrissat B."/>
            <person name="Wilson D.B."/>
            <person name="McBride M.J."/>
        </authorList>
    </citation>
    <scope>NUCLEOTIDE SEQUENCE [LARGE SCALE GENOMIC DNA]</scope>
    <source>
        <strain>ATCC 33406 / DSM 1761 / JCM 20678 / CIP 103989 / IAM 12607 / NBRC 15051 / NCIMB 9469 / D465</strain>
    </source>
</reference>
<protein>
    <recommendedName>
        <fullName evidence="1">Large ribosomal subunit protein uL30</fullName>
    </recommendedName>
    <alternativeName>
        <fullName evidence="2">50S ribosomal protein L30</fullName>
    </alternativeName>
</protein>